<accession>E9Q173</accession>
<keyword id="KW-1185">Reference proteome</keyword>
<protein>
    <recommendedName>
        <fullName>BTB/POZ domain-containing protein 16</fullName>
    </recommendedName>
</protein>
<dbReference type="EMBL" id="AC115697">
    <property type="status" value="NOT_ANNOTATED_CDS"/>
    <property type="molecule type" value="Genomic_DNA"/>
</dbReference>
<dbReference type="EMBL" id="AC145294">
    <property type="status" value="NOT_ANNOTATED_CDS"/>
    <property type="molecule type" value="Genomic_DNA"/>
</dbReference>
<dbReference type="EMBL" id="AC149596">
    <property type="status" value="NOT_ANNOTATED_CDS"/>
    <property type="molecule type" value="Genomic_DNA"/>
</dbReference>
<dbReference type="CCDS" id="CCDS52416.1"/>
<dbReference type="RefSeq" id="NP_001074507.2">
    <property type="nucleotide sequence ID" value="NM_001081038.2"/>
</dbReference>
<dbReference type="FunCoup" id="E9Q173">
    <property type="interactions" value="1"/>
</dbReference>
<dbReference type="STRING" id="10090.ENSMUSP00000035433"/>
<dbReference type="iPTMnet" id="E9Q173"/>
<dbReference type="PhosphoSitePlus" id="E9Q173"/>
<dbReference type="PaxDb" id="10090-ENSMUSP00000035433"/>
<dbReference type="ProteomicsDB" id="273778"/>
<dbReference type="Antibodypedia" id="53241">
    <property type="antibodies" value="81 antibodies from 17 providers"/>
</dbReference>
<dbReference type="Ensembl" id="ENSMUST00000048453.7">
    <property type="protein sequence ID" value="ENSMUSP00000035433.6"/>
    <property type="gene ID" value="ENSMUSG00000040298.7"/>
</dbReference>
<dbReference type="GeneID" id="330660"/>
<dbReference type="KEGG" id="mmu:330660"/>
<dbReference type="UCSC" id="uc009kap.2">
    <property type="organism name" value="mouse"/>
</dbReference>
<dbReference type="AGR" id="MGI:3045247"/>
<dbReference type="CTD" id="118663"/>
<dbReference type="MGI" id="MGI:3045247">
    <property type="gene designation" value="Btbd16"/>
</dbReference>
<dbReference type="VEuPathDB" id="HostDB:ENSMUSG00000040298"/>
<dbReference type="eggNOG" id="KOG4682">
    <property type="taxonomic scope" value="Eukaryota"/>
</dbReference>
<dbReference type="GeneTree" id="ENSGT00940000161718"/>
<dbReference type="HOGENOM" id="CLU_025904_0_0_1"/>
<dbReference type="InParanoid" id="E9Q173"/>
<dbReference type="OMA" id="RHTDLEF"/>
<dbReference type="OrthoDB" id="6359943at2759"/>
<dbReference type="PhylomeDB" id="E9Q173"/>
<dbReference type="TreeFam" id="TF316048"/>
<dbReference type="BioGRID-ORCS" id="330660">
    <property type="hits" value="1 hit in 78 CRISPR screens"/>
</dbReference>
<dbReference type="ChiTaRS" id="Btbd16">
    <property type="organism name" value="mouse"/>
</dbReference>
<dbReference type="PRO" id="PR:E9Q173"/>
<dbReference type="Proteomes" id="UP000000589">
    <property type="component" value="Chromosome 7"/>
</dbReference>
<dbReference type="RNAct" id="E9Q173">
    <property type="molecule type" value="protein"/>
</dbReference>
<dbReference type="Bgee" id="ENSMUSG00000040298">
    <property type="expression patterns" value="Expressed in spermatid and 14 other cell types or tissues"/>
</dbReference>
<dbReference type="ExpressionAtlas" id="E9Q173">
    <property type="expression patterns" value="baseline and differential"/>
</dbReference>
<dbReference type="CDD" id="cd18492">
    <property type="entry name" value="BACK_BTBD16"/>
    <property type="match status" value="1"/>
</dbReference>
<dbReference type="Gene3D" id="3.30.710.10">
    <property type="entry name" value="Potassium Channel Kv1.1, Chain A"/>
    <property type="match status" value="1"/>
</dbReference>
<dbReference type="InterPro" id="IPR056426">
    <property type="entry name" value="BTB_BTBDG"/>
</dbReference>
<dbReference type="InterPro" id="IPR042833">
    <property type="entry name" value="BTBD16"/>
</dbReference>
<dbReference type="InterPro" id="IPR048859">
    <property type="entry name" value="BTBD16_C"/>
</dbReference>
<dbReference type="InterPro" id="IPR011333">
    <property type="entry name" value="SKP1/BTB/POZ_sf"/>
</dbReference>
<dbReference type="PANTHER" id="PTHR46843">
    <property type="entry name" value="BTB/POZ DOMAIN-CONTAINING PROTEIN 16"/>
    <property type="match status" value="1"/>
</dbReference>
<dbReference type="PANTHER" id="PTHR46843:SF1">
    <property type="entry name" value="BTB_POZ DOMAIN-CONTAINING PROTEIN 16"/>
    <property type="match status" value="1"/>
</dbReference>
<dbReference type="Pfam" id="PF23998">
    <property type="entry name" value="BTB_BTBDG"/>
    <property type="match status" value="1"/>
</dbReference>
<dbReference type="Pfam" id="PF21059">
    <property type="entry name" value="BTBD16_C"/>
    <property type="match status" value="1"/>
</dbReference>
<dbReference type="SUPFAM" id="SSF54695">
    <property type="entry name" value="POZ domain"/>
    <property type="match status" value="1"/>
</dbReference>
<sequence>MKMLNSVSGSFRKKAGDSRSRECRTRLERRIVGATNRWRFPQDHFCGDLLALSQMCNVLNVDLDEALKNPDRLCISKFQKLFSENIMNSGTQSGEADVILECLGFKWELHHPQIFQSGTLAKLYLTALIQNMKSSQRELDKVQKAHPSGKIKKRSPVKKIIISMRINDPAVTRVAFALALKNLYMKEVEMTVDNVLGVLASAHILQFNRLFQKCVNMMMNRLAPSTIKNFYLAGCKYEEEQLTMACEKWLAMNLVPLVGTQIHLRQIPEPLLYKVLKSPRLFTFSEFHLLKTLLMWVYLQMNCKVQMVPIHETILAFFNSFPKKCCFLEQDPGQNWMPLFLCLRLHGITSGKDLEVLKHINFFPESWLVRVTANHYHALESGGNMVHLKDLSTQAMRFGLLFRQEYTTYSERISIYGYFFEIKGIKHDPTSYSFSMQRIKHTDLECPSPVCEHSTISLRSERLVKYEIQAQTLVDGRWQEFRTNQIMQKFGFIKPGCKSHVLKIQTVGIPIYASFAFIFPAS</sequence>
<gene>
    <name type="primary">Btbd16</name>
</gene>
<reference key="1">
    <citation type="journal article" date="2009" name="PLoS Biol.">
        <title>Lineage-specific biology revealed by a finished genome assembly of the mouse.</title>
        <authorList>
            <person name="Church D.M."/>
            <person name="Goodstadt L."/>
            <person name="Hillier L.W."/>
            <person name="Zody M.C."/>
            <person name="Goldstein S."/>
            <person name="She X."/>
            <person name="Bult C.J."/>
            <person name="Agarwala R."/>
            <person name="Cherry J.L."/>
            <person name="DiCuccio M."/>
            <person name="Hlavina W."/>
            <person name="Kapustin Y."/>
            <person name="Meric P."/>
            <person name="Maglott D."/>
            <person name="Birtle Z."/>
            <person name="Marques A.C."/>
            <person name="Graves T."/>
            <person name="Zhou S."/>
            <person name="Teague B."/>
            <person name="Potamousis K."/>
            <person name="Churas C."/>
            <person name="Place M."/>
            <person name="Herschleb J."/>
            <person name="Runnheim R."/>
            <person name="Forrest D."/>
            <person name="Amos-Landgraf J."/>
            <person name="Schwartz D.C."/>
            <person name="Cheng Z."/>
            <person name="Lindblad-Toh K."/>
            <person name="Eichler E.E."/>
            <person name="Ponting C.P."/>
        </authorList>
    </citation>
    <scope>NUCLEOTIDE SEQUENCE [LARGE SCALE GENOMIC DNA]</scope>
    <source>
        <strain>C57BL/6J</strain>
    </source>
</reference>
<organism>
    <name type="scientific">Mus musculus</name>
    <name type="common">Mouse</name>
    <dbReference type="NCBI Taxonomy" id="10090"/>
    <lineage>
        <taxon>Eukaryota</taxon>
        <taxon>Metazoa</taxon>
        <taxon>Chordata</taxon>
        <taxon>Craniata</taxon>
        <taxon>Vertebrata</taxon>
        <taxon>Euteleostomi</taxon>
        <taxon>Mammalia</taxon>
        <taxon>Eutheria</taxon>
        <taxon>Euarchontoglires</taxon>
        <taxon>Glires</taxon>
        <taxon>Rodentia</taxon>
        <taxon>Myomorpha</taxon>
        <taxon>Muroidea</taxon>
        <taxon>Muridae</taxon>
        <taxon>Murinae</taxon>
        <taxon>Mus</taxon>
        <taxon>Mus</taxon>
    </lineage>
</organism>
<proteinExistence type="predicted"/>
<feature type="chain" id="PRO_0000416102" description="BTB/POZ domain-containing protein 16">
    <location>
        <begin position="1"/>
        <end position="522"/>
    </location>
</feature>
<feature type="domain" description="BTB">
    <location>
        <begin position="166"/>
        <end position="222"/>
    </location>
</feature>
<name>BTBDG_MOUSE</name>